<sequence length="204" mass="24030">MGASKYMQELWRKKQSDVMRFLLRVRCWQYRQLSALHRAPRPTRPDKARRLGYKAKQGYVIYRVRVRRGGRKRPVPKGATYGKPVHHGVNQLKFARSLQSIAEERAGRHCGGLRVLNSYWVGEDSTYKFFEVILIDTFHKAIRRNPDMQWITKAVHKHREMRGLTSAGKKSRGLGKGHKFHLTIGGSRRAAWRRRNTLQLHRYR</sequence>
<evidence type="ECO:0000250" key="1"/>
<evidence type="ECO:0000250" key="2">
    <source>
        <dbReference type="UniProtKB" id="P61313"/>
    </source>
</evidence>
<evidence type="ECO:0000305" key="3"/>
<dbReference type="EMBL" id="AY249424">
    <property type="protein sequence ID" value="AAP35261.1"/>
    <property type="molecule type" value="mRNA"/>
</dbReference>
<dbReference type="SMR" id="Q7T2N4"/>
<dbReference type="GO" id="GO:0022625">
    <property type="term" value="C:cytosolic large ribosomal subunit"/>
    <property type="evidence" value="ECO:0007669"/>
    <property type="project" value="TreeGrafter"/>
</dbReference>
<dbReference type="GO" id="GO:0003723">
    <property type="term" value="F:RNA binding"/>
    <property type="evidence" value="ECO:0007669"/>
    <property type="project" value="TreeGrafter"/>
</dbReference>
<dbReference type="GO" id="GO:0003735">
    <property type="term" value="F:structural constituent of ribosome"/>
    <property type="evidence" value="ECO:0007669"/>
    <property type="project" value="InterPro"/>
</dbReference>
<dbReference type="GO" id="GO:0002181">
    <property type="term" value="P:cytoplasmic translation"/>
    <property type="evidence" value="ECO:0007669"/>
    <property type="project" value="TreeGrafter"/>
</dbReference>
<dbReference type="FunFam" id="3.40.1120.10:FF:000001">
    <property type="entry name" value="Ribosomal protein L15"/>
    <property type="match status" value="1"/>
</dbReference>
<dbReference type="Gene3D" id="3.40.1120.10">
    <property type="entry name" value="Ribosomal protein l15e"/>
    <property type="match status" value="1"/>
</dbReference>
<dbReference type="InterPro" id="IPR024794">
    <property type="entry name" value="Rbsml_eL15_core_dom_sf"/>
</dbReference>
<dbReference type="InterPro" id="IPR000439">
    <property type="entry name" value="Ribosomal_eL15"/>
</dbReference>
<dbReference type="InterPro" id="IPR020925">
    <property type="entry name" value="Ribosomal_eL15_CS"/>
</dbReference>
<dbReference type="InterPro" id="IPR012678">
    <property type="entry name" value="Ribosomal_uL23/eL15/eS24_sf"/>
</dbReference>
<dbReference type="NCBIfam" id="NF003269">
    <property type="entry name" value="PRK04243.1"/>
    <property type="match status" value="1"/>
</dbReference>
<dbReference type="PANTHER" id="PTHR11847:SF4">
    <property type="entry name" value="LARGE RIBOSOMAL SUBUNIT PROTEIN EL15"/>
    <property type="match status" value="1"/>
</dbReference>
<dbReference type="PANTHER" id="PTHR11847">
    <property type="entry name" value="RIBOSOMAL PROTEIN L15"/>
    <property type="match status" value="1"/>
</dbReference>
<dbReference type="Pfam" id="PF00827">
    <property type="entry name" value="Ribosomal_L15e"/>
    <property type="match status" value="1"/>
</dbReference>
<dbReference type="SMART" id="SM01384">
    <property type="entry name" value="Ribosomal_L15e"/>
    <property type="match status" value="1"/>
</dbReference>
<dbReference type="SUPFAM" id="SSF54189">
    <property type="entry name" value="Ribosomal proteins S24e, L23 and L15e"/>
    <property type="match status" value="1"/>
</dbReference>
<dbReference type="PROSITE" id="PS01194">
    <property type="entry name" value="RIBOSOMAL_L15E"/>
    <property type="match status" value="1"/>
</dbReference>
<proteinExistence type="evidence at transcript level"/>
<comment type="function">
    <text evidence="2">Component of the large ribosomal subunit. The ribosome is a large ribonucleoprotein complex responsible for the synthesis of proteins in the cell.</text>
</comment>
<comment type="subunit">
    <text evidence="2">Component of the large ribosomal subunit.</text>
</comment>
<comment type="subcellular location">
    <subcellularLocation>
        <location evidence="2">Cytoplasm</location>
    </subcellularLocation>
</comment>
<comment type="similarity">
    <text evidence="3">Belongs to the eukaryotic ribosomal protein eL15 family.</text>
</comment>
<organism>
    <name type="scientific">Silurus meridionalis</name>
    <name type="common">Southern catfish</name>
    <name type="synonym">Silurus soldatovi meridionalis</name>
    <dbReference type="NCBI Taxonomy" id="175797"/>
    <lineage>
        <taxon>Eukaryota</taxon>
        <taxon>Metazoa</taxon>
        <taxon>Chordata</taxon>
        <taxon>Craniata</taxon>
        <taxon>Vertebrata</taxon>
        <taxon>Euteleostomi</taxon>
        <taxon>Actinopterygii</taxon>
        <taxon>Neopterygii</taxon>
        <taxon>Teleostei</taxon>
        <taxon>Ostariophysi</taxon>
        <taxon>Siluriformes</taxon>
        <taxon>Siluridae</taxon>
        <taxon>Silurus</taxon>
    </lineage>
</organism>
<feature type="initiator methionine" description="Removed" evidence="1">
    <location>
        <position position="1"/>
    </location>
</feature>
<feature type="chain" id="PRO_0000127547" description="Large ribosomal subunit protein eL15">
    <location>
        <begin position="2"/>
        <end position="204"/>
    </location>
</feature>
<name>RL15_SILME</name>
<accession>Q7T2N4</accession>
<reference key="1">
    <citation type="submission" date="2003-03" db="EMBL/GenBank/DDBJ databases">
        <title>Evaluating the potential of ribosomal protein L15 as a novel marker for phylogenetic analysis: a comparative analysis of 15 teleost RPL15 cDNAs.</title>
        <authorList>
            <person name="Song P."/>
            <person name="Zhang J."/>
            <person name="Xiang Z."/>
        </authorList>
    </citation>
    <scope>NUCLEOTIDE SEQUENCE [MRNA]</scope>
    <source>
        <tissue>Liver</tissue>
    </source>
</reference>
<gene>
    <name type="primary">rpl15</name>
</gene>
<protein>
    <recommendedName>
        <fullName evidence="3">Large ribosomal subunit protein eL15</fullName>
    </recommendedName>
    <alternativeName>
        <fullName>60S ribosomal protein L15</fullName>
    </alternativeName>
</protein>
<keyword id="KW-0963">Cytoplasm</keyword>
<keyword id="KW-0687">Ribonucleoprotein</keyword>
<keyword id="KW-0689">Ribosomal protein</keyword>